<comment type="function">
    <text evidence="7 8">Cell adhesion protein involved in the control of epithelial morphogenesis (PubMed:9012534). Together with metalloproteinase zmp-1 and hemicentin him-4, plays a role in anchor cell (AC) invasion during postembryonic vulval development (PubMed:15960981).</text>
</comment>
<comment type="subcellular location">
    <subcellularLocation>
        <location evidence="7">Cell membrane</location>
        <topology evidence="9">Single-pass type I membrane protein</topology>
    </subcellularLocation>
    <subcellularLocation>
        <location evidence="7">Basolateral cell membrane</location>
    </subcellularLocation>
    <subcellularLocation>
        <location evidence="2">Cell junction</location>
    </subcellularLocation>
</comment>
<comment type="tissue specificity">
    <text evidence="7">Expressed in the anchor cell.</text>
</comment>
<comment type="domain">
    <text evidence="1">Three calcium ions are usually bound at the interface of each cadherin domain and rigidify the connections, imparting a strong curvature to the full-length ectodomain.</text>
</comment>
<comment type="disruption phenotype">
    <text evidence="7">2 percent of mutants have a delay in anchor cell invasion. In 7 percent of zmp-1 and cdh-3 double mutants and in 25 percent of cdh-3, him-4 and zmp-1 triple mutants, anchor cell invasion is delayed.</text>
</comment>
<proteinExistence type="evidence at transcript level"/>
<sequence length="3343" mass="375752">MTIRIFFSIFLLNHLIFFHLFNFTHQFSEETIKFSVSEDAKLNTIIGHLEAEIGYTYRLSRGNSKIKFDEQTLELSVSSPLDRESENAIDMLIITSPPSIIHILIDVLDVNDNSPIFPIDVQRVEIPETAPIGWRVQISGATDPDEGKNGTIGKYELVDSLATVDTMSPFGIVQSDGFLFLEVTGKLDRETRDLYSMRLTAIDQGVPELSSSCHLNILILDINDNPPNFGIRSLTLNWNGLPNTKLFSLNATDLDSNENSLLTYRILPSGPTSEMFSISDENILVTQNNTECLQRCEFVVEARDSGVPPLSTTLNIVVNMEYGNEHEPNINIRFYPSDYPFIIVQPEDVNGKTLAILSITDSDGPLGANSTIWIENGNEQSIFSLISRQSINILTVKHVENANQEQYILEFRANDGQSPADRITRKELKIFFKKYVKSTQIHVERESHVTVEKDTVPGSFVAHVETNCTDMCSFELANSDVFKIDPFNGIIVTSSILPEGVTSYHLPIRIHLPPPSTQLVEADVFVKVIQESVPKNLIRSSESPIHLKRAYTFTTWQDVSLGTVIGRLPKAQIYSTIDTVSELGVFPDGSVFVGKTITSDFVTLPVTLVNRNTTQTSIITLIVKPLNQHSPICQITEIHVLENAPIGTIFGRIQARDEDSGLSGVVSYKILTKSDDYDGIFHLDSTSGSLRSLKAFDAEKKRSYTFEYEAKDLGTPSKTTNCPATIFIEDVNDNVPKFGSRYYTATISGKSNETVAIVQANDNDVDVKNQKLQYHLLNYHDFFQLDKETGKVTTIQDVPMTWQRLNISISAVNMDSERFLQSKTFLLVTVTSSSKLAVQLNSGNLIRIFKNDKIGEKVGHLDIASSETVYWSTLDPRLHVDSSGNIILIRRNAKQASTGFDIILTSENGEKTEKVNFEVEFVDSERSEDVEKVMDIVLNENTTEVSNLMNDWKNWKISRVILENANNSGNNTFFLEHKKLWRTKNATVSNAYIILESEDQEGSPKSFKLLHVTTSPSPSSESSCISPAHLISPPSTVPLPSNCSNVKLQNLKTSLQIHENNLLIPTQSELINHVDLVSTQNSDMKPFMMTLIKDYLSEDVRFSTNNVLMLLSSIHPIGTSFGRVTAESGYRIRYYIVGTDKISIDADTGELILKERFYRNLNDILIVAVIPKGIAKAKITIEVIEDRLILPQSNFFIPSPPSFNSKSKIGKIPIDRDDVTIDVIDEHFYVRNFEIFVKRHFIPNSNFYDLKGTVKKGKLSAPISVTLFFGEKMKSREIRENELMFEIEENSPIGTVVGVVPNSDTTKYRLVDPTCGLLIDQEGIIRTTTVFDRENTSLLKTKMIEPSENRIWNLLIFIADVNDNKPKILNAPGRIIVYDDLNYKLEWEDLDAIASDVSFSIVDGDVFGNLEIEDSGVISLNSIPNESFNATIRIYDNRPPFKVHFDDVTIEFQVTQKLRAVTCEDAEFWMFFGNEDVGMLIASEIVTWRIVPQIGSDSFKIDPITGIIQSTPNTKPTSDIAKLKIQAISYDGERVGFCDVKIHIDKAAFVENVVLSNGTFEFNISETADRFTEVGKIVILGAGLEGSVFRIQDNDYNFTISPFDGTIFTNSPLDFENIKTYRFNITAGKSTSQVIIHVTDENDEAPRFITGDVVNLKVLEELDTVSYPLIIGSSIAEDLDEGQNGLVTYSILSGNTSLFAVNSTTGDILSLIPLDREESSLHELLIEAKDAGIPSLSATSKILIHVGDINDNTPEFELSSYFIKISENSKIGSKIIRILATDKDKDAELQYSLESNDEITIPFRINVATGWITVAGKVNREENEEFRFFVKVTDGEKSSKVIVEIHVEDFNDNHPMINDRNSDIFVPDPTRSVEIIHVINVHDLDKSDHLKFSLNNSNLNLSENGEITLKSPLQTAVPVRVTVSDDAGHVAFMEYLFHPHSRKHFPVFVEKLDTVSVREHDEQELAVFKANGDSIRYSIVSRCSDHLEMEKSTGILKTKSSLDAEEYSECLVFIIATTYFDNKPLSTITKATIKIVDINDNSPRFDQQLYRFNVTENSGPKLIGHVIARDIDRSSRVFYEIVGGDANHEFMVTESGQIESVRDLDRETKSEYHLIVEAIDDGKPRRRGNTTVIVTVLDEDDNAPRFSRIFHVEVPEDVRIGEPVIQLSASDADEHSNHRFELDGGGEGIPFRVDENTGMVFVNDSLDFEKKQSYRIKVKLTDGAWLIETSLFVNVKDVNDNAPIFEKPEYLFISEENSAEIGQFHASDMDSENNGKIRYSVTSPYFKIEPSTGVLSRFRQQLPQPLMSLKVTATDHGVPRLQKTVLAHLVDKSSFGKIKQRRIRETTKVGDVIGKKIDSGATIFPLDVATVTRDGDVVLKKNATQFWILENDTIYEFVKTDAMESTKNENITLNITSDISMNSDNFKVLRNGSLIVFGFSGNQAHLKIQCDDGFWPKQDRKIINLVVNNLDADRNSFPLARQPTIRKSMSLPKTMILNIPFDSPTGTIIWKNLENAVQYMENQKNVNFSNGSKNLILKTPLEETMQIDIFGQNFERSALTITPNRSLMACPVFQKNFYFFESVANLDSKHPTEIHNFGWSSDEIKGCQIDIFDKTHLFYQNGSSLIFLKPLLPGTYQFSLQIKSQSDSKIRSACHVVVTVIPPTNLTTWNIPSVIFATRNYNIPNLFHLPSGYSLSSDQRTFSLIGSGTGKNISKLSSGVYQVNVVGKDEKKEIVRILLDDVADDVTSKDIEYHVVSSTLSNLKIPTPIDVECFPRTEENLYEITKDCRLLFNSDVINTTIPVVTSPANSTWNLRIINESPETVKSLENNAVSLEIITQKSSIPRLITDLRVTYSDMKIYCLGTWQTSEDIKYHITFVIVDRNGVVIEESEARQTLTSFLKKHRPGYLDFVDFDKDPCDGVTCIQKNSTCQPTLVGDSASRLVSRSSSVIFDLPLKKLTARCFCSSGIDCYDDTTNETIQKTQKINVITTCDDIDCGPRGKCFMEESSQPICRCGQGFESMYSCERADDVFSMSTGGSVEISVRNGTSHLLKCSENCDGRDIQKIEFDFRTVQLEKSELFRVDFGKQVALIELIGGSLTFSITDAYARPIETRIEKRVNDGRWHRLLFQMSEDGRRISIQVNGRGKEVKSRVPLQMLFTAKKIQLMTPAAFCFRRLLAQNQFVHPILNRNKFFEISSTGTSRNECQFDSIQSGSGGFRLFSNFSNTTTLILLITLALISLIGFSVCLLAIRRRWRQKSPGDQKQTERSNGWTGHVMPRRRGHINRSMVKSPDDDTYDVATVYGMKSTSTDDITHIYTSSSSRRYQPPTAPSYRRDGHINMAYL</sequence>
<feature type="signal peptide" evidence="3">
    <location>
        <begin position="1"/>
        <end position="26"/>
    </location>
</feature>
<feature type="chain" id="PRO_0000004020" description="Cadherin-3">
    <location>
        <begin position="27"/>
        <end position="3343"/>
    </location>
</feature>
<feature type="topological domain" description="Extracellular" evidence="3">
    <location>
        <begin position="27"/>
        <end position="3228"/>
    </location>
</feature>
<feature type="transmembrane region" description="Helical" evidence="3">
    <location>
        <begin position="3229"/>
        <end position="3250"/>
    </location>
</feature>
<feature type="topological domain" description="Cytoplasmic" evidence="3">
    <location>
        <begin position="3251"/>
        <end position="3343"/>
    </location>
</feature>
<feature type="domain" description="Cadherin 1" evidence="4">
    <location>
        <begin position="28"/>
        <end position="117"/>
    </location>
</feature>
<feature type="domain" description="Cadherin 2" evidence="4">
    <location>
        <begin position="118"/>
        <end position="229"/>
    </location>
</feature>
<feature type="domain" description="Cadherin 3" evidence="4">
    <location>
        <begin position="242"/>
        <end position="330"/>
    </location>
</feature>
<feature type="domain" description="Cadherin 4" evidence="4">
    <location>
        <begin position="632"/>
        <end position="738"/>
    </location>
</feature>
<feature type="domain" description="Cadherin 5" evidence="4">
    <location>
        <begin position="1279"/>
        <end position="1368"/>
    </location>
</feature>
<feature type="domain" description="Cadherin 6" evidence="4">
    <location>
        <begin position="1545"/>
        <end position="1648"/>
    </location>
</feature>
<feature type="domain" description="Cadherin 7" evidence="4">
    <location>
        <begin position="1676"/>
        <end position="1756"/>
    </location>
</feature>
<feature type="domain" description="Cadherin 8" evidence="4">
    <location>
        <begin position="1757"/>
        <end position="1857"/>
    </location>
</feature>
<feature type="domain" description="Cadherin 9" evidence="4">
    <location>
        <begin position="1954"/>
        <end position="2045"/>
    </location>
</feature>
<feature type="domain" description="Cadherin 10" evidence="4">
    <location>
        <begin position="2046"/>
        <end position="2145"/>
    </location>
</feature>
<feature type="domain" description="Cadherin 11" evidence="4">
    <location>
        <begin position="2146"/>
        <end position="2245"/>
    </location>
</feature>
<feature type="domain" description="Laminin G-like" evidence="5">
    <location>
        <begin position="3040"/>
        <end position="3205"/>
    </location>
</feature>
<feature type="region of interest" description="Disordered" evidence="6">
    <location>
        <begin position="3257"/>
        <end position="3277"/>
    </location>
</feature>
<feature type="glycosylation site" description="N-linked (GlcNAc...) asparagine" evidence="3">
    <location>
        <position position="22"/>
    </location>
</feature>
<feature type="glycosylation site" description="N-linked (GlcNAc...) asparagine" evidence="3">
    <location>
        <position position="149"/>
    </location>
</feature>
<feature type="glycosylation site" description="N-linked (GlcNAc...) asparagine" evidence="3">
    <location>
        <position position="250"/>
    </location>
</feature>
<feature type="glycosylation site" description="N-linked (GlcNAc...) asparagine" evidence="3">
    <location>
        <position position="288"/>
    </location>
</feature>
<feature type="glycosylation site" description="N-linked (GlcNAc...) asparagine" evidence="3">
    <location>
        <position position="369"/>
    </location>
</feature>
<feature type="glycosylation site" description="N-linked (GlcNAc...) asparagine" evidence="3">
    <location>
        <position position="467"/>
    </location>
</feature>
<feature type="glycosylation site" description="N-linked (GlcNAc...) asparagine" evidence="3">
    <location>
        <position position="612"/>
    </location>
</feature>
<feature type="glycosylation site" description="N-linked (GlcNAc...) asparagine" evidence="3">
    <location>
        <position position="752"/>
    </location>
</feature>
<feature type="glycosylation site" description="N-linked (GlcNAc...) asparagine" evidence="3">
    <location>
        <position position="806"/>
    </location>
</feature>
<feature type="glycosylation site" description="N-linked (GlcNAc...) asparagine" evidence="3">
    <location>
        <position position="941"/>
    </location>
</feature>
<feature type="glycosylation site" description="N-linked (GlcNAc...) asparagine" evidence="3">
    <location>
        <position position="966"/>
    </location>
</feature>
<feature type="glycosylation site" description="N-linked (GlcNAc...) asparagine" evidence="3">
    <location>
        <position position="970"/>
    </location>
</feature>
<feature type="glycosylation site" description="N-linked (GlcNAc...) asparagine" evidence="3">
    <location>
        <position position="985"/>
    </location>
</feature>
<feature type="glycosylation site" description="N-linked (GlcNAc...) asparagine" evidence="3">
    <location>
        <position position="1042"/>
    </location>
</feature>
<feature type="glycosylation site" description="N-linked (GlcNAc...) asparagine" evidence="3">
    <location>
        <position position="1335"/>
    </location>
</feature>
<feature type="glycosylation site" description="N-linked (GlcNAc...) asparagine" evidence="3">
    <location>
        <position position="1425"/>
    </location>
</feature>
<feature type="glycosylation site" description="N-linked (GlcNAc...) asparagine" evidence="3">
    <location>
        <position position="1429"/>
    </location>
</feature>
<feature type="glycosylation site" description="N-linked (GlcNAc...) asparagine" evidence="3">
    <location>
        <position position="1557"/>
    </location>
</feature>
<feature type="glycosylation site" description="N-linked (GlcNAc...) asparagine" evidence="3">
    <location>
        <position position="1563"/>
    </location>
</feature>
<feature type="glycosylation site" description="N-linked (GlcNAc...) asparagine" evidence="3">
    <location>
        <position position="1597"/>
    </location>
</feature>
<feature type="glycosylation site" description="N-linked (GlcNAc...) asparagine" evidence="3">
    <location>
        <position position="1624"/>
    </location>
</feature>
<feature type="glycosylation site" description="N-linked (GlcNAc...) asparagine" evidence="3">
    <location>
        <position position="1695"/>
    </location>
</feature>
<feature type="glycosylation site" description="N-linked (GlcNAc...) asparagine" evidence="3">
    <location>
        <position position="1702"/>
    </location>
</feature>
<feature type="glycosylation site" description="N-linked (GlcNAc...) asparagine" evidence="3">
    <location>
        <position position="1895"/>
    </location>
</feature>
<feature type="glycosylation site" description="N-linked (GlcNAc...) asparagine" evidence="3">
    <location>
        <position position="1900"/>
    </location>
</feature>
<feature type="glycosylation site" description="N-linked (GlcNAc...) asparagine" evidence="3">
    <location>
        <position position="2053"/>
    </location>
</feature>
<feature type="glycosylation site" description="N-linked (GlcNAc...) asparagine" evidence="3">
    <location>
        <position position="2129"/>
    </location>
</feature>
<feature type="glycosylation site" description="N-linked (GlcNAc...) asparagine" evidence="3">
    <location>
        <position position="2203"/>
    </location>
</feature>
<feature type="glycosylation site" description="N-linked (GlcNAc...) asparagine" evidence="3">
    <location>
        <position position="2382"/>
    </location>
</feature>
<feature type="glycosylation site" description="N-linked (GlcNAc...) asparagine" evidence="3">
    <location>
        <position position="2391"/>
    </location>
</feature>
<feature type="glycosylation site" description="N-linked (GlcNAc...) asparagine" evidence="3">
    <location>
        <position position="2410"/>
    </location>
</feature>
<feature type="glycosylation site" description="N-linked (GlcNAc...) asparagine" evidence="3">
    <location>
        <position position="2414"/>
    </location>
</feature>
<feature type="glycosylation site" description="N-linked (GlcNAc...) asparagine" evidence="3">
    <location>
        <position position="2431"/>
    </location>
</feature>
<feature type="glycosylation site" description="N-linked (GlcNAc...) asparagine" evidence="3">
    <location>
        <position position="2527"/>
    </location>
</feature>
<feature type="glycosylation site" description="N-linked (GlcNAc...) asparagine" evidence="3">
    <location>
        <position position="2530"/>
    </location>
</feature>
<feature type="glycosylation site" description="N-linked (GlcNAc...) asparagine" evidence="3">
    <location>
        <position position="2564"/>
    </location>
</feature>
<feature type="glycosylation site" description="N-linked (GlcNAc...) asparagine" evidence="3">
    <location>
        <position position="2621"/>
    </location>
</feature>
<feature type="glycosylation site" description="N-linked (GlcNAc...) asparagine" evidence="3">
    <location>
        <position position="2665"/>
    </location>
</feature>
<feature type="glycosylation site" description="N-linked (GlcNAc...) asparagine" evidence="3">
    <location>
        <position position="2712"/>
    </location>
</feature>
<feature type="glycosylation site" description="N-linked (GlcNAc...) asparagine" evidence="3">
    <location>
        <position position="2798"/>
    </location>
</feature>
<feature type="glycosylation site" description="N-linked (GlcNAc...) asparagine" evidence="3">
    <location>
        <position position="2809"/>
    </location>
</feature>
<feature type="glycosylation site" description="N-linked (GlcNAc...) asparagine" evidence="3">
    <location>
        <position position="2927"/>
    </location>
</feature>
<feature type="glycosylation site" description="N-linked (GlcNAc...) asparagine" evidence="3">
    <location>
        <position position="2976"/>
    </location>
</feature>
<feature type="glycosylation site" description="N-linked (GlcNAc...) asparagine" evidence="3">
    <location>
        <position position="3045"/>
    </location>
</feature>
<feature type="glycosylation site" description="N-linked (GlcNAc...) asparagine" evidence="3">
    <location>
        <position position="3222"/>
    </location>
</feature>
<feature type="glycosylation site" description="N-linked (GlcNAc...) asparagine" evidence="3">
    <location>
        <position position="3225"/>
    </location>
</feature>
<feature type="disulfide bond" evidence="5">
    <location>
        <begin position="3172"/>
        <end position="3205"/>
    </location>
</feature>
<reference key="1">
    <citation type="journal article" date="1994" name="Nature">
        <title>2.2 Mb of contiguous nucleotide sequence from chromosome III of C. elegans.</title>
        <authorList>
            <person name="Wilson R."/>
            <person name="Ainscough R."/>
            <person name="Anderson K."/>
            <person name="Baynes C."/>
            <person name="Berks M."/>
            <person name="Bonfield J."/>
            <person name="Burton J."/>
            <person name="Connell M."/>
            <person name="Copsey T."/>
            <person name="Cooper J."/>
            <person name="Coulson A."/>
            <person name="Craxton M."/>
            <person name="Dear S."/>
            <person name="Du Z."/>
            <person name="Durbin R."/>
            <person name="Favello A."/>
            <person name="Fraser A."/>
            <person name="Fulton L."/>
            <person name="Gardner A."/>
            <person name="Green P."/>
            <person name="Hawkins T."/>
            <person name="Hillier L."/>
            <person name="Jier M."/>
            <person name="Johnston L."/>
            <person name="Jones M."/>
            <person name="Kershaw J."/>
            <person name="Kirsten J."/>
            <person name="Laisster N."/>
            <person name="Latreille P."/>
            <person name="Lightning J."/>
            <person name="Lloyd C."/>
            <person name="Mortimore B."/>
            <person name="O'Callaghan M."/>
            <person name="Parsons J."/>
            <person name="Percy C."/>
            <person name="Rifken L."/>
            <person name="Roopra A."/>
            <person name="Saunders D."/>
            <person name="Shownkeen R."/>
            <person name="Sims M."/>
            <person name="Smaldon N."/>
            <person name="Smith A."/>
            <person name="Smith M."/>
            <person name="Sonnhammer E."/>
            <person name="Staden R."/>
            <person name="Sulston J."/>
            <person name="Thierry-Mieg J."/>
            <person name="Thomas K."/>
            <person name="Vaudin M."/>
            <person name="Vaughan K."/>
            <person name="Waterston R."/>
            <person name="Watson A."/>
            <person name="Weinstock L."/>
            <person name="Wilkinson-Sproat J."/>
            <person name="Wohldman P."/>
        </authorList>
    </citation>
    <scope>NUCLEOTIDE SEQUENCE [LARGE SCALE GENOMIC DNA]</scope>
    <source>
        <strain>Bristol N2</strain>
    </source>
</reference>
<reference key="2">
    <citation type="journal article" date="1998" name="Science">
        <title>Genome sequence of the nematode C. elegans: a platform for investigating biology.</title>
        <authorList>
            <consortium name="The C. elegans sequencing consortium"/>
        </authorList>
    </citation>
    <scope>NUCLEOTIDE SEQUENCE [LARGE SCALE GENOMIC DNA]</scope>
    <source>
        <strain>Bristol N2</strain>
    </source>
</reference>
<reference key="3">
    <citation type="journal article" date="1996" name="Development">
        <title>cdh-3, a gene encoding a member of the cadherin superfamily, functions in epithelial cell morphogenesis in Caenorhabditis elegans.</title>
        <authorList>
            <person name="Pettitt J."/>
            <person name="Wood W.B."/>
            <person name="Plasterk R.H."/>
        </authorList>
    </citation>
    <scope>FUNCTION</scope>
</reference>
<reference key="4">
    <citation type="journal article" date="2005" name="Cell">
        <title>FOS-1 promotes basement-membrane removal during anchor-cell invasion in C. elegans.</title>
        <authorList>
            <person name="Sherwood D.R."/>
            <person name="Butler J.A."/>
            <person name="Kramer J.M."/>
            <person name="Sternberg P.W."/>
        </authorList>
    </citation>
    <scope>FUNCTION</scope>
    <scope>SUBCELLULAR LOCATION</scope>
    <scope>TISSUE SPECIFICITY</scope>
    <scope>DISRUPTION PHENOTYPE</scope>
</reference>
<organism>
    <name type="scientific">Caenorhabditis elegans</name>
    <dbReference type="NCBI Taxonomy" id="6239"/>
    <lineage>
        <taxon>Eukaryota</taxon>
        <taxon>Metazoa</taxon>
        <taxon>Ecdysozoa</taxon>
        <taxon>Nematoda</taxon>
        <taxon>Chromadorea</taxon>
        <taxon>Rhabditida</taxon>
        <taxon>Rhabditina</taxon>
        <taxon>Rhabditomorpha</taxon>
        <taxon>Rhabditoidea</taxon>
        <taxon>Rhabditidae</taxon>
        <taxon>Peloderinae</taxon>
        <taxon>Caenorhabditis</taxon>
    </lineage>
</organism>
<dbReference type="EMBL" id="FO080308">
    <property type="protein sequence ID" value="CCD62768.1"/>
    <property type="molecule type" value="Genomic_DNA"/>
</dbReference>
<dbReference type="PIR" id="S44887">
    <property type="entry name" value="S44887"/>
</dbReference>
<dbReference type="RefSeq" id="NP_498687.2">
    <property type="nucleotide sequence ID" value="NM_066286.4"/>
</dbReference>
<dbReference type="SMR" id="P34616"/>
<dbReference type="FunCoup" id="P34616">
    <property type="interactions" value="9"/>
</dbReference>
<dbReference type="STRING" id="6239.ZK112.7.1"/>
<dbReference type="GlyCosmos" id="P34616">
    <property type="glycosylation" value="46 sites, No reported glycans"/>
</dbReference>
<dbReference type="PaxDb" id="6239-ZK112.7"/>
<dbReference type="PeptideAtlas" id="P34616"/>
<dbReference type="EnsemblMetazoa" id="ZK112.7.1">
    <property type="protein sequence ID" value="ZK112.7.1"/>
    <property type="gene ID" value="WBGene00000395"/>
</dbReference>
<dbReference type="GeneID" id="176085"/>
<dbReference type="KEGG" id="cel:CELE_ZK112.7"/>
<dbReference type="UCSC" id="ZK112.7">
    <property type="organism name" value="c. elegans"/>
</dbReference>
<dbReference type="AGR" id="WB:WBGene00000395"/>
<dbReference type="CTD" id="176085"/>
<dbReference type="WormBase" id="ZK112.7">
    <property type="protein sequence ID" value="CE50490"/>
    <property type="gene ID" value="WBGene00000395"/>
    <property type="gene designation" value="cdh-3"/>
</dbReference>
<dbReference type="eggNOG" id="KOG1219">
    <property type="taxonomic scope" value="Eukaryota"/>
</dbReference>
<dbReference type="GeneTree" id="ENSGT00940000167267"/>
<dbReference type="HOGENOM" id="CLU_225093_0_0_1"/>
<dbReference type="InParanoid" id="P34616"/>
<dbReference type="OrthoDB" id="6252479at2759"/>
<dbReference type="PhylomeDB" id="P34616"/>
<dbReference type="PRO" id="PR:P34616"/>
<dbReference type="Proteomes" id="UP000001940">
    <property type="component" value="Chromosome III"/>
</dbReference>
<dbReference type="Bgee" id="WBGene00000395">
    <property type="expression patterns" value="Expressed in pharyngeal muscle cell (C elegans) and 13 other cell types or tissues"/>
</dbReference>
<dbReference type="GO" id="GO:0070161">
    <property type="term" value="C:anchoring junction"/>
    <property type="evidence" value="ECO:0007669"/>
    <property type="project" value="UniProtKB-SubCell"/>
</dbReference>
<dbReference type="GO" id="GO:0005604">
    <property type="term" value="C:basement membrane"/>
    <property type="evidence" value="ECO:0000314"/>
    <property type="project" value="UniProtKB"/>
</dbReference>
<dbReference type="GO" id="GO:0016323">
    <property type="term" value="C:basolateral plasma membrane"/>
    <property type="evidence" value="ECO:0007669"/>
    <property type="project" value="UniProtKB-SubCell"/>
</dbReference>
<dbReference type="GO" id="GO:0005737">
    <property type="term" value="C:cytoplasm"/>
    <property type="evidence" value="ECO:0000314"/>
    <property type="project" value="WormBase"/>
</dbReference>
<dbReference type="GO" id="GO:0005886">
    <property type="term" value="C:plasma membrane"/>
    <property type="evidence" value="ECO:0000314"/>
    <property type="project" value="WormBase"/>
</dbReference>
<dbReference type="GO" id="GO:0005509">
    <property type="term" value="F:calcium ion binding"/>
    <property type="evidence" value="ECO:0007669"/>
    <property type="project" value="InterPro"/>
</dbReference>
<dbReference type="GO" id="GO:0005198">
    <property type="term" value="F:structural molecule activity"/>
    <property type="evidence" value="ECO:0000304"/>
    <property type="project" value="WormBase"/>
</dbReference>
<dbReference type="GO" id="GO:0034769">
    <property type="term" value="P:basement membrane disassembly"/>
    <property type="evidence" value="ECO:0000316"/>
    <property type="project" value="UniProtKB"/>
</dbReference>
<dbReference type="GO" id="GO:0007155">
    <property type="term" value="P:cell adhesion"/>
    <property type="evidence" value="ECO:0000318"/>
    <property type="project" value="GO_Central"/>
</dbReference>
<dbReference type="GO" id="GO:0007156">
    <property type="term" value="P:homophilic cell adhesion via plasma membrane adhesion molecules"/>
    <property type="evidence" value="ECO:0007669"/>
    <property type="project" value="InterPro"/>
</dbReference>
<dbReference type="GO" id="GO:0016331">
    <property type="term" value="P:morphogenesis of embryonic epithelium"/>
    <property type="evidence" value="ECO:0000304"/>
    <property type="project" value="WormBase"/>
</dbReference>
<dbReference type="GO" id="GO:0045138">
    <property type="term" value="P:nematode male tail tip morphogenesis"/>
    <property type="evidence" value="ECO:0000315"/>
    <property type="project" value="WormBase"/>
</dbReference>
<dbReference type="CDD" id="cd11304">
    <property type="entry name" value="Cadherin_repeat"/>
    <property type="match status" value="14"/>
</dbReference>
<dbReference type="CDD" id="cd00110">
    <property type="entry name" value="LamG"/>
    <property type="match status" value="1"/>
</dbReference>
<dbReference type="FunFam" id="2.60.120.200:FF:000403">
    <property type="entry name" value="Cadherin 3"/>
    <property type="match status" value="1"/>
</dbReference>
<dbReference type="FunFam" id="2.60.40.60:FF:000408">
    <property type="entry name" value="Cadherin 3"/>
    <property type="match status" value="1"/>
</dbReference>
<dbReference type="FunFam" id="2.60.40.60:FF:000456">
    <property type="entry name" value="Cadherin 3"/>
    <property type="match status" value="1"/>
</dbReference>
<dbReference type="FunFam" id="2.60.40.60:FF:000470">
    <property type="entry name" value="Cadherin 3"/>
    <property type="match status" value="1"/>
</dbReference>
<dbReference type="FunFam" id="2.60.40.60:FF:000496">
    <property type="entry name" value="Cadherin 3"/>
    <property type="match status" value="1"/>
</dbReference>
<dbReference type="FunFam" id="2.60.40.60:FF:000289">
    <property type="entry name" value="cadherin-86C isoform X2"/>
    <property type="match status" value="1"/>
</dbReference>
<dbReference type="FunFam" id="2.60.40.60:FF:000092">
    <property type="entry name" value="Protocadherin 8"/>
    <property type="match status" value="3"/>
</dbReference>
<dbReference type="FunFam" id="2.60.40.60:FF:000035">
    <property type="entry name" value="Protocadherin Fat 3"/>
    <property type="match status" value="2"/>
</dbReference>
<dbReference type="Gene3D" id="2.60.120.200">
    <property type="match status" value="1"/>
</dbReference>
<dbReference type="Gene3D" id="2.60.40.60">
    <property type="entry name" value="Cadherins"/>
    <property type="match status" value="13"/>
</dbReference>
<dbReference type="InterPro" id="IPR002126">
    <property type="entry name" value="Cadherin-like_dom"/>
</dbReference>
<dbReference type="InterPro" id="IPR015919">
    <property type="entry name" value="Cadherin-like_sf"/>
</dbReference>
<dbReference type="InterPro" id="IPR020894">
    <property type="entry name" value="Cadherin_CS"/>
</dbReference>
<dbReference type="InterPro" id="IPR013320">
    <property type="entry name" value="ConA-like_dom_sf"/>
</dbReference>
<dbReference type="InterPro" id="IPR000742">
    <property type="entry name" value="EGF-like_dom"/>
</dbReference>
<dbReference type="InterPro" id="IPR001791">
    <property type="entry name" value="Laminin_G"/>
</dbReference>
<dbReference type="PANTHER" id="PTHR24026">
    <property type="entry name" value="FAT ATYPICAL CADHERIN-RELATED"/>
    <property type="match status" value="1"/>
</dbReference>
<dbReference type="PANTHER" id="PTHR24026:SF126">
    <property type="entry name" value="PROTOCADHERIN FAT 4"/>
    <property type="match status" value="1"/>
</dbReference>
<dbReference type="Pfam" id="PF00028">
    <property type="entry name" value="Cadherin"/>
    <property type="match status" value="7"/>
</dbReference>
<dbReference type="Pfam" id="PF25374">
    <property type="entry name" value="Cadherin_FAT4_N"/>
    <property type="match status" value="1"/>
</dbReference>
<dbReference type="Pfam" id="PF02210">
    <property type="entry name" value="Laminin_G_2"/>
    <property type="match status" value="1"/>
</dbReference>
<dbReference type="PRINTS" id="PR00205">
    <property type="entry name" value="CADHERIN"/>
</dbReference>
<dbReference type="SMART" id="SM00112">
    <property type="entry name" value="CA"/>
    <property type="match status" value="13"/>
</dbReference>
<dbReference type="SMART" id="SM00282">
    <property type="entry name" value="LamG"/>
    <property type="match status" value="1"/>
</dbReference>
<dbReference type="SUPFAM" id="SSF49313">
    <property type="entry name" value="Cadherin-like"/>
    <property type="match status" value="14"/>
</dbReference>
<dbReference type="SUPFAM" id="SSF49899">
    <property type="entry name" value="Concanavalin A-like lectins/glucanases"/>
    <property type="match status" value="1"/>
</dbReference>
<dbReference type="PROSITE" id="PS00232">
    <property type="entry name" value="CADHERIN_1"/>
    <property type="match status" value="8"/>
</dbReference>
<dbReference type="PROSITE" id="PS50268">
    <property type="entry name" value="CADHERIN_2"/>
    <property type="match status" value="11"/>
</dbReference>
<dbReference type="PROSITE" id="PS50025">
    <property type="entry name" value="LAM_G_DOMAIN"/>
    <property type="match status" value="1"/>
</dbReference>
<name>CADH3_CAEEL</name>
<gene>
    <name type="primary">cdh-3</name>
    <name type="ORF">ZK112.7</name>
</gene>
<keyword id="KW-0106">Calcium</keyword>
<keyword id="KW-0130">Cell adhesion</keyword>
<keyword id="KW-0965">Cell junction</keyword>
<keyword id="KW-1003">Cell membrane</keyword>
<keyword id="KW-1015">Disulfide bond</keyword>
<keyword id="KW-0325">Glycoprotein</keyword>
<keyword id="KW-0472">Membrane</keyword>
<keyword id="KW-0479">Metal-binding</keyword>
<keyword id="KW-1185">Reference proteome</keyword>
<keyword id="KW-0677">Repeat</keyword>
<keyword id="KW-0732">Signal</keyword>
<keyword id="KW-0812">Transmembrane</keyword>
<keyword id="KW-1133">Transmembrane helix</keyword>
<accession>P34616</accession>
<evidence type="ECO:0000250" key="1"/>
<evidence type="ECO:0000250" key="2">
    <source>
        <dbReference type="UniProtKB" id="Q9BYE9"/>
    </source>
</evidence>
<evidence type="ECO:0000255" key="3"/>
<evidence type="ECO:0000255" key="4">
    <source>
        <dbReference type="PROSITE-ProRule" id="PRU00043"/>
    </source>
</evidence>
<evidence type="ECO:0000255" key="5">
    <source>
        <dbReference type="PROSITE-ProRule" id="PRU00122"/>
    </source>
</evidence>
<evidence type="ECO:0000256" key="6">
    <source>
        <dbReference type="SAM" id="MobiDB-lite"/>
    </source>
</evidence>
<evidence type="ECO:0000269" key="7">
    <source>
    </source>
</evidence>
<evidence type="ECO:0000269" key="8">
    <source>
    </source>
</evidence>
<evidence type="ECO:0000305" key="9"/>
<protein>
    <recommendedName>
        <fullName>Cadherin-3</fullName>
    </recommendedName>
</protein>